<sequence length="525" mass="60059">MSLIKNKNCFIPKKIFSEKDDFIFIPCDGVIQEKFEKIALSFESPKLNEINFHKKVKIIYFLDDYQHEIKKEMLPSSIISIIFYNIKNILSSDSIPDTVKFLGFNGYKHQITNEIVKGSVTSLGVGGDMGYPLDKHLLNGSSIKTLCFDGNYSHQITNDSIIDHLDYLCLMKTKFPLNEKSLKNPLNIYPPTIPKNISFYETYKFPIPGTIFPKIESTIITFNINITDIRQPITSKLFQDLPINYNVYIGWGYRHKLDECTIDSKIRFLGIGDVVHPVPETFLGIRVKFYSGYSHQIKPFPNNASLRELALGNVKYPITKDTIPSPWGVGELSIDKGYDFKLTPDLFENVRALKLIDIKSTVFTKHSLPKSNCVLAKVSLISLQIPFDLSFFPTDIINTMLIHNVSQVIGTNQLPKSLTSLSLIKVKLDPKLTIPKSVSHLKIEEIDRPLTKESIPNNLEVFELLNYKFPISKELFPDTVHYIVIGETINPFTIEMIPTSLKHLVSAHDYKFLPFDKPLLKYYYQ</sequence>
<feature type="chain" id="PRO_0000363977" description="FNIP repeat-containing protein DDB_G0274617">
    <location>
        <begin position="1"/>
        <end position="525"/>
    </location>
</feature>
<feature type="repeat" description="FNIP">
    <location>
        <begin position="65"/>
        <end position="107"/>
    </location>
</feature>
<gene>
    <name type="ORF">DDB_G0274617</name>
</gene>
<reference key="1">
    <citation type="journal article" date="2002" name="Nature">
        <title>Sequence and analysis of chromosome 2 of Dictyostelium discoideum.</title>
        <authorList>
            <person name="Gloeckner G."/>
            <person name="Eichinger L."/>
            <person name="Szafranski K."/>
            <person name="Pachebat J.A."/>
            <person name="Bankier A.T."/>
            <person name="Dear P.H."/>
            <person name="Lehmann R."/>
            <person name="Baumgart C."/>
            <person name="Parra G."/>
            <person name="Abril J.F."/>
            <person name="Guigo R."/>
            <person name="Kumpf K."/>
            <person name="Tunggal B."/>
            <person name="Cox E.C."/>
            <person name="Quail M.A."/>
            <person name="Platzer M."/>
            <person name="Rosenthal A."/>
            <person name="Noegel A.A."/>
        </authorList>
    </citation>
    <scope>NUCLEOTIDE SEQUENCE [LARGE SCALE GENOMIC DNA]</scope>
    <source>
        <strain>AX4</strain>
    </source>
</reference>
<reference key="2">
    <citation type="journal article" date="2005" name="Nature">
        <title>The genome of the social amoeba Dictyostelium discoideum.</title>
        <authorList>
            <person name="Eichinger L."/>
            <person name="Pachebat J.A."/>
            <person name="Gloeckner G."/>
            <person name="Rajandream M.A."/>
            <person name="Sucgang R."/>
            <person name="Berriman M."/>
            <person name="Song J."/>
            <person name="Olsen R."/>
            <person name="Szafranski K."/>
            <person name="Xu Q."/>
            <person name="Tunggal B."/>
            <person name="Kummerfeld S."/>
            <person name="Madera M."/>
            <person name="Konfortov B.A."/>
            <person name="Rivero F."/>
            <person name="Bankier A.T."/>
            <person name="Lehmann R."/>
            <person name="Hamlin N."/>
            <person name="Davies R."/>
            <person name="Gaudet P."/>
            <person name="Fey P."/>
            <person name="Pilcher K."/>
            <person name="Chen G."/>
            <person name="Saunders D."/>
            <person name="Sodergren E.J."/>
            <person name="Davis P."/>
            <person name="Kerhornou A."/>
            <person name="Nie X."/>
            <person name="Hall N."/>
            <person name="Anjard C."/>
            <person name="Hemphill L."/>
            <person name="Bason N."/>
            <person name="Farbrother P."/>
            <person name="Desany B."/>
            <person name="Just E."/>
            <person name="Morio T."/>
            <person name="Rost R."/>
            <person name="Churcher C.M."/>
            <person name="Cooper J."/>
            <person name="Haydock S."/>
            <person name="van Driessche N."/>
            <person name="Cronin A."/>
            <person name="Goodhead I."/>
            <person name="Muzny D.M."/>
            <person name="Mourier T."/>
            <person name="Pain A."/>
            <person name="Lu M."/>
            <person name="Harper D."/>
            <person name="Lindsay R."/>
            <person name="Hauser H."/>
            <person name="James K.D."/>
            <person name="Quiles M."/>
            <person name="Madan Babu M."/>
            <person name="Saito T."/>
            <person name="Buchrieser C."/>
            <person name="Wardroper A."/>
            <person name="Felder M."/>
            <person name="Thangavelu M."/>
            <person name="Johnson D."/>
            <person name="Knights A."/>
            <person name="Loulseged H."/>
            <person name="Mungall K.L."/>
            <person name="Oliver K."/>
            <person name="Price C."/>
            <person name="Quail M.A."/>
            <person name="Urushihara H."/>
            <person name="Hernandez J."/>
            <person name="Rabbinowitsch E."/>
            <person name="Steffen D."/>
            <person name="Sanders M."/>
            <person name="Ma J."/>
            <person name="Kohara Y."/>
            <person name="Sharp S."/>
            <person name="Simmonds M.N."/>
            <person name="Spiegler S."/>
            <person name="Tivey A."/>
            <person name="Sugano S."/>
            <person name="White B."/>
            <person name="Walker D."/>
            <person name="Woodward J.R."/>
            <person name="Winckler T."/>
            <person name="Tanaka Y."/>
            <person name="Shaulsky G."/>
            <person name="Schleicher M."/>
            <person name="Weinstock G.M."/>
            <person name="Rosenthal A."/>
            <person name="Cox E.C."/>
            <person name="Chisholm R.L."/>
            <person name="Gibbs R.A."/>
            <person name="Loomis W.F."/>
            <person name="Platzer M."/>
            <person name="Kay R.R."/>
            <person name="Williams J.G."/>
            <person name="Dear P.H."/>
            <person name="Noegel A.A."/>
            <person name="Barrell B.G."/>
            <person name="Kuspa A."/>
        </authorList>
    </citation>
    <scope>NUCLEOTIDE SEQUENCE [LARGE SCALE GENOMIC DNA]</scope>
    <source>
        <strain>AX4</strain>
    </source>
</reference>
<proteinExistence type="predicted"/>
<name>Y4617_DICDI</name>
<keyword id="KW-1185">Reference proteome</keyword>
<keyword id="KW-0677">Repeat</keyword>
<protein>
    <recommendedName>
        <fullName>FNIP repeat-containing protein DDB_G0274617</fullName>
    </recommendedName>
</protein>
<dbReference type="EMBL" id="AAFI02000012">
    <property type="protein sequence ID" value="EAL70201.1"/>
    <property type="molecule type" value="Genomic_DNA"/>
</dbReference>
<dbReference type="RefSeq" id="XP_644294.1">
    <property type="nucleotide sequence ID" value="XM_639202.1"/>
</dbReference>
<dbReference type="SMR" id="Q554M9"/>
<dbReference type="PaxDb" id="44689-DDB0232242"/>
<dbReference type="EnsemblProtists" id="EAL70201">
    <property type="protein sequence ID" value="EAL70201"/>
    <property type="gene ID" value="DDB_G0274617"/>
</dbReference>
<dbReference type="GeneID" id="8619722"/>
<dbReference type="KEGG" id="ddi:DDB_G0274617"/>
<dbReference type="dictyBase" id="DDB_G0274617"/>
<dbReference type="VEuPathDB" id="AmoebaDB:DDB_G0274617"/>
<dbReference type="HOGENOM" id="CLU_521215_0_0_1"/>
<dbReference type="InParanoid" id="Q554M9"/>
<dbReference type="PhylomeDB" id="Q554M9"/>
<dbReference type="PRO" id="PR:Q554M9"/>
<dbReference type="Proteomes" id="UP000002195">
    <property type="component" value="Chromosome 2"/>
</dbReference>
<dbReference type="InterPro" id="IPR008615">
    <property type="entry name" value="FNIP"/>
</dbReference>
<dbReference type="InterPro" id="IPR052697">
    <property type="entry name" value="FNIP_repeat"/>
</dbReference>
<dbReference type="PANTHER" id="PTHR32031:SF123">
    <property type="entry name" value="B BOX-TYPE DOMAIN-CONTAINING PROTEIN-RELATED"/>
    <property type="match status" value="1"/>
</dbReference>
<dbReference type="PANTHER" id="PTHR32031">
    <property type="entry name" value="FNIP REPEAT-CONTAINING PROTEIN-RELATED-RELATED"/>
    <property type="match status" value="1"/>
</dbReference>
<dbReference type="Pfam" id="PF05725">
    <property type="entry name" value="FNIP"/>
    <property type="match status" value="1"/>
</dbReference>
<organism>
    <name type="scientific">Dictyostelium discoideum</name>
    <name type="common">Social amoeba</name>
    <dbReference type="NCBI Taxonomy" id="44689"/>
    <lineage>
        <taxon>Eukaryota</taxon>
        <taxon>Amoebozoa</taxon>
        <taxon>Evosea</taxon>
        <taxon>Eumycetozoa</taxon>
        <taxon>Dictyostelia</taxon>
        <taxon>Dictyosteliales</taxon>
        <taxon>Dictyosteliaceae</taxon>
        <taxon>Dictyostelium</taxon>
    </lineage>
</organism>
<accession>Q554M9</accession>